<organism>
    <name type="scientific">Campylobacter jejuni subsp. jejuni serotype O:2 (strain ATCC 700819 / NCTC 11168)</name>
    <dbReference type="NCBI Taxonomy" id="192222"/>
    <lineage>
        <taxon>Bacteria</taxon>
        <taxon>Pseudomonadati</taxon>
        <taxon>Campylobacterota</taxon>
        <taxon>Epsilonproteobacteria</taxon>
        <taxon>Campylobacterales</taxon>
        <taxon>Campylobacteraceae</taxon>
        <taxon>Campylobacter</taxon>
    </lineage>
</organism>
<reference key="1">
    <citation type="journal article" date="1995" name="Gene">
        <title>Cloning and transcription regulation of the ferric uptake regulatory gene of Campylobacter jejuni TGH9011.</title>
        <authorList>
            <person name="Chan V.L."/>
            <person name="Louie H."/>
            <person name="Bingham H.L."/>
        </authorList>
    </citation>
    <scope>NUCLEOTIDE SEQUENCE [GENOMIC DNA]</scope>
    <source>
        <strain>ATCC 43431 / TGH 9011 / Serotype O:3</strain>
    </source>
</reference>
<reference key="2">
    <citation type="journal article" date="1998" name="J. Bacteriol.">
        <title>Iron-responsive gene regulation in a campylobacter jejuni fur mutant.</title>
        <authorList>
            <person name="van Vliet A.H.M."/>
            <person name="Wooldridge K.G."/>
            <person name="Ketley J.M."/>
        </authorList>
    </citation>
    <scope>NUCLEOTIDE SEQUENCE [GENOMIC DNA]</scope>
    <source>
        <strain>ATCC 700819 / NCTC 11168</strain>
    </source>
</reference>
<reference key="3">
    <citation type="journal article" date="2000" name="Nature">
        <title>The genome sequence of the food-borne pathogen Campylobacter jejuni reveals hypervariable sequences.</title>
        <authorList>
            <person name="Parkhill J."/>
            <person name="Wren B.W."/>
            <person name="Mungall K.L."/>
            <person name="Ketley J.M."/>
            <person name="Churcher C.M."/>
            <person name="Basham D."/>
            <person name="Chillingworth T."/>
            <person name="Davies R.M."/>
            <person name="Feltwell T."/>
            <person name="Holroyd S."/>
            <person name="Jagels K."/>
            <person name="Karlyshev A.V."/>
            <person name="Moule S."/>
            <person name="Pallen M.J."/>
            <person name="Penn C.W."/>
            <person name="Quail M.A."/>
            <person name="Rajandream M.A."/>
            <person name="Rutherford K.M."/>
            <person name="van Vliet A.H.M."/>
            <person name="Whitehead S."/>
            <person name="Barrell B.G."/>
        </authorList>
    </citation>
    <scope>NUCLEOTIDE SEQUENCE [LARGE SCALE GENOMIC DNA]</scope>
    <source>
        <strain>ATCC 700819 / NCTC 11168</strain>
    </source>
</reference>
<keyword id="KW-0002">3D-structure</keyword>
<keyword id="KW-0963">Cytoplasm</keyword>
<keyword id="KW-0238">DNA-binding</keyword>
<keyword id="KW-0408">Iron</keyword>
<keyword id="KW-0479">Metal-binding</keyword>
<keyword id="KW-1185">Reference proteome</keyword>
<keyword id="KW-0678">Repressor</keyword>
<keyword id="KW-0804">Transcription</keyword>
<keyword id="KW-0805">Transcription regulation</keyword>
<keyword id="KW-0862">Zinc</keyword>
<name>FUR_CAMJE</name>
<sequence length="157" mass="18054">MLIENVEYDVLLERFKKILRQGGLKYTKQREVLLKTLYHSDTHYTPESLYMEIKQAEPDLNVGIATVYRTLNLLEEAEMVTSISFGSAGKKYELANKPHHDHMICKNCGKIIEFENPIIERQQALIAKEHGFKLTGHLMQLYGVCGDCNNQKAKVKI</sequence>
<accession>P0C631</accession>
<accession>O68606</accession>
<accession>P48796</accession>
<accession>Q0PBB0</accession>
<accession>Q46112</accession>
<feature type="chain" id="PRO_0000095548" description="Ferric uptake regulation protein">
    <location>
        <begin position="1"/>
        <end position="157"/>
    </location>
</feature>
<feature type="region of interest" description="DNA-binding" evidence="1">
    <location>
        <begin position="1"/>
        <end position="96"/>
    </location>
</feature>
<feature type="region of interest" description="Dimerization" evidence="1">
    <location>
        <begin position="97"/>
        <end position="157"/>
    </location>
</feature>
<feature type="binding site" evidence="1">
    <location>
        <position position="43"/>
    </location>
    <ligand>
        <name>Zn(2+)</name>
        <dbReference type="ChEBI" id="CHEBI:29105"/>
    </ligand>
</feature>
<feature type="binding site" evidence="1">
    <location>
        <position position="93"/>
    </location>
    <ligand>
        <name>Zn(2+)</name>
        <dbReference type="ChEBI" id="CHEBI:29105"/>
    </ligand>
</feature>
<feature type="binding site" evidence="1">
    <location>
        <position position="99"/>
    </location>
    <ligand>
        <name>Fe cation</name>
        <dbReference type="ChEBI" id="CHEBI:24875"/>
    </ligand>
</feature>
<feature type="binding site" evidence="1">
    <location>
        <position position="101"/>
    </location>
    <ligand>
        <name>Fe cation</name>
        <dbReference type="ChEBI" id="CHEBI:24875"/>
    </ligand>
</feature>
<feature type="binding site" evidence="1">
    <location>
        <position position="102"/>
    </location>
    <ligand>
        <name>Zn(2+)</name>
        <dbReference type="ChEBI" id="CHEBI:29105"/>
    </ligand>
</feature>
<feature type="binding site" evidence="1">
    <location>
        <position position="105"/>
    </location>
    <ligand>
        <name>Zn(2+)</name>
        <dbReference type="ChEBI" id="CHEBI:29105"/>
    </ligand>
</feature>
<feature type="binding site" evidence="1">
    <location>
        <position position="108"/>
    </location>
    <ligand>
        <name>Zn(2+)</name>
        <dbReference type="ChEBI" id="CHEBI:29105"/>
    </ligand>
</feature>
<feature type="binding site" evidence="1">
    <location>
        <position position="113"/>
    </location>
    <ligand>
        <name>Zn(2+)</name>
        <dbReference type="ChEBI" id="CHEBI:29105"/>
    </ligand>
</feature>
<feature type="binding site" evidence="1">
    <location>
        <position position="120"/>
    </location>
    <ligand>
        <name>Fe cation</name>
        <dbReference type="ChEBI" id="CHEBI:24875"/>
    </ligand>
</feature>
<feature type="binding site" evidence="1">
    <location>
        <position position="137"/>
    </location>
    <ligand>
        <name>Fe cation</name>
        <dbReference type="ChEBI" id="CHEBI:24875"/>
    </ligand>
</feature>
<feature type="sequence conflict" description="In Ref. 1; CAA84528." evidence="2" ref="1">
    <original>T</original>
    <variation>I</variation>
    <location>
        <position position="42"/>
    </location>
</feature>
<feature type="helix" evidence="3">
    <location>
        <begin position="6"/>
        <end position="22"/>
    </location>
</feature>
<feature type="helix" evidence="3">
    <location>
        <begin position="28"/>
        <end position="38"/>
    </location>
</feature>
<feature type="helix" evidence="3">
    <location>
        <begin position="46"/>
        <end position="56"/>
    </location>
</feature>
<feature type="helix" evidence="3">
    <location>
        <begin position="58"/>
        <end position="60"/>
    </location>
</feature>
<feature type="helix" evidence="3">
    <location>
        <begin position="64"/>
        <end position="76"/>
    </location>
</feature>
<feature type="strand" evidence="3">
    <location>
        <begin position="79"/>
        <end position="82"/>
    </location>
</feature>
<feature type="strand" evidence="3">
    <location>
        <begin position="92"/>
        <end position="94"/>
    </location>
</feature>
<feature type="strand" evidence="3">
    <location>
        <begin position="101"/>
        <end position="105"/>
    </location>
</feature>
<feature type="turn" evidence="3">
    <location>
        <begin position="106"/>
        <end position="108"/>
    </location>
</feature>
<feature type="strand" evidence="3">
    <location>
        <begin position="111"/>
        <end position="114"/>
    </location>
</feature>
<feature type="helix" evidence="3">
    <location>
        <begin position="117"/>
        <end position="129"/>
    </location>
</feature>
<feature type="strand" evidence="3">
    <location>
        <begin position="133"/>
        <end position="144"/>
    </location>
</feature>
<gene>
    <name type="primary">fur</name>
    <name type="ordered locus">Cj0400</name>
</gene>
<evidence type="ECO:0000250" key="1"/>
<evidence type="ECO:0000305" key="2"/>
<evidence type="ECO:0007829" key="3">
    <source>
        <dbReference type="PDB" id="4ETS"/>
    </source>
</evidence>
<proteinExistence type="evidence at protein level"/>
<protein>
    <recommendedName>
        <fullName>Ferric uptake regulation protein</fullName>
        <shortName>Ferric uptake regulator</shortName>
    </recommendedName>
</protein>
<comment type="function">
    <text evidence="1">Acts as a global negative controlling element, employing Fe(2+) as a cofactor to bind the operator of the repressed genes.</text>
</comment>
<comment type="subunit">
    <text evidence="1">Homodimer.</text>
</comment>
<comment type="interaction">
    <interactant intactId="EBI-1327904">
        <id>P0C631</id>
    </interactant>
    <interactant intactId="EBI-1327904">
        <id>P0C631</id>
        <label>fur</label>
    </interactant>
    <organismsDiffer>false</organismsDiffer>
    <experiments>2</experiments>
</comment>
<comment type="subcellular location">
    <subcellularLocation>
        <location evidence="1">Cytoplasm</location>
    </subcellularLocation>
</comment>
<comment type="similarity">
    <text evidence="2">Belongs to the Fur family.</text>
</comment>
<dbReference type="EMBL" id="Z35165">
    <property type="protein sequence ID" value="CAA84528.1"/>
    <property type="molecule type" value="Genomic_DNA"/>
</dbReference>
<dbReference type="EMBL" id="AF052056">
    <property type="protein sequence ID" value="AAC64259.1"/>
    <property type="molecule type" value="Genomic_DNA"/>
</dbReference>
<dbReference type="EMBL" id="AL111168">
    <property type="protein sequence ID" value="CAL34550.1"/>
    <property type="molecule type" value="Genomic_DNA"/>
</dbReference>
<dbReference type="PIR" id="F81383">
    <property type="entry name" value="F81383"/>
</dbReference>
<dbReference type="RefSeq" id="WP_002854230.1">
    <property type="nucleotide sequence ID" value="NZ_SZUC01000004.1"/>
</dbReference>
<dbReference type="RefSeq" id="YP_002343837.1">
    <property type="nucleotide sequence ID" value="NC_002163.1"/>
</dbReference>
<dbReference type="PDB" id="4ETS">
    <property type="method" value="X-ray"/>
    <property type="resolution" value="2.10 A"/>
    <property type="chains" value="A/B=1-157"/>
</dbReference>
<dbReference type="PDBsum" id="4ETS"/>
<dbReference type="SMR" id="P0C631"/>
<dbReference type="DIP" id="DIP-60047N"/>
<dbReference type="IntAct" id="P0C631">
    <property type="interactions" value="16"/>
</dbReference>
<dbReference type="STRING" id="192222.Cj0400"/>
<dbReference type="PaxDb" id="192222-Cj0400"/>
<dbReference type="EnsemblBacteria" id="CAL34550">
    <property type="protein sequence ID" value="CAL34550"/>
    <property type="gene ID" value="Cj0400"/>
</dbReference>
<dbReference type="GeneID" id="904724"/>
<dbReference type="KEGG" id="cje:Cj0400"/>
<dbReference type="PATRIC" id="fig|192222.6.peg.391"/>
<dbReference type="eggNOG" id="COG0735">
    <property type="taxonomic scope" value="Bacteria"/>
</dbReference>
<dbReference type="HOGENOM" id="CLU_096072_3_1_7"/>
<dbReference type="OrthoDB" id="8659436at2"/>
<dbReference type="EvolutionaryTrace" id="P0C631"/>
<dbReference type="Proteomes" id="UP000000799">
    <property type="component" value="Chromosome"/>
</dbReference>
<dbReference type="GO" id="GO:0005829">
    <property type="term" value="C:cytosol"/>
    <property type="evidence" value="ECO:0007669"/>
    <property type="project" value="TreeGrafter"/>
</dbReference>
<dbReference type="GO" id="GO:0003700">
    <property type="term" value="F:DNA-binding transcription factor activity"/>
    <property type="evidence" value="ECO:0007669"/>
    <property type="project" value="InterPro"/>
</dbReference>
<dbReference type="GO" id="GO:0042802">
    <property type="term" value="F:identical protein binding"/>
    <property type="evidence" value="ECO:0000353"/>
    <property type="project" value="IntAct"/>
</dbReference>
<dbReference type="GO" id="GO:0000976">
    <property type="term" value="F:transcription cis-regulatory region binding"/>
    <property type="evidence" value="ECO:0007669"/>
    <property type="project" value="TreeGrafter"/>
</dbReference>
<dbReference type="GO" id="GO:0008270">
    <property type="term" value="F:zinc ion binding"/>
    <property type="evidence" value="ECO:0007669"/>
    <property type="project" value="TreeGrafter"/>
</dbReference>
<dbReference type="GO" id="GO:0045892">
    <property type="term" value="P:negative regulation of DNA-templated transcription"/>
    <property type="evidence" value="ECO:0007669"/>
    <property type="project" value="TreeGrafter"/>
</dbReference>
<dbReference type="GO" id="GO:1900705">
    <property type="term" value="P:negative regulation of siderophore biosynthetic process"/>
    <property type="evidence" value="ECO:0007669"/>
    <property type="project" value="TreeGrafter"/>
</dbReference>
<dbReference type="CDD" id="cd07153">
    <property type="entry name" value="Fur_like"/>
    <property type="match status" value="1"/>
</dbReference>
<dbReference type="FunFam" id="1.10.10.10:FF:000760">
    <property type="entry name" value="Ferric uptake regulation protein"/>
    <property type="match status" value="1"/>
</dbReference>
<dbReference type="FunFam" id="3.30.1490.190:FF:000001">
    <property type="entry name" value="Ferric uptake regulation protein"/>
    <property type="match status" value="1"/>
</dbReference>
<dbReference type="Gene3D" id="3.30.1490.190">
    <property type="match status" value="1"/>
</dbReference>
<dbReference type="Gene3D" id="1.10.10.10">
    <property type="entry name" value="Winged helix-like DNA-binding domain superfamily/Winged helix DNA-binding domain"/>
    <property type="match status" value="1"/>
</dbReference>
<dbReference type="InterPro" id="IPR002481">
    <property type="entry name" value="FUR"/>
</dbReference>
<dbReference type="InterPro" id="IPR043135">
    <property type="entry name" value="Fur_C"/>
</dbReference>
<dbReference type="InterPro" id="IPR036388">
    <property type="entry name" value="WH-like_DNA-bd_sf"/>
</dbReference>
<dbReference type="InterPro" id="IPR036390">
    <property type="entry name" value="WH_DNA-bd_sf"/>
</dbReference>
<dbReference type="PANTHER" id="PTHR33202:SF2">
    <property type="entry name" value="FERRIC UPTAKE REGULATION PROTEIN"/>
    <property type="match status" value="1"/>
</dbReference>
<dbReference type="PANTHER" id="PTHR33202">
    <property type="entry name" value="ZINC UPTAKE REGULATION PROTEIN"/>
    <property type="match status" value="1"/>
</dbReference>
<dbReference type="Pfam" id="PF01475">
    <property type="entry name" value="FUR"/>
    <property type="match status" value="1"/>
</dbReference>
<dbReference type="SUPFAM" id="SSF46785">
    <property type="entry name" value="Winged helix' DNA-binding domain"/>
    <property type="match status" value="1"/>
</dbReference>